<comment type="function">
    <text evidence="3 6 7 8 11">Adapter protein that plays a role in integrin signaling via ILK and in activation of the GTPases CDC42 and RAC1 by guanine exchange factors, such as ARHGEF6. Is involved in the reorganization of the actin cytoskeleton and formation of lamellipodia. Plays a role in cell adhesion, cell spreading, establishment or maintenance of cell polarity, and cell migration.</text>
</comment>
<comment type="subunit">
    <text evidence="3 6 7 8 10 11 12">Interacts with DYSF. Interacts with ILK, ARHGEF6, PXN (via LD motifs), ACTN2 and actin.</text>
</comment>
<comment type="interaction">
    <interactant intactId="EBI-1047679">
        <id>Q9HBI1</id>
    </interactant>
    <interactant intactId="EBI-6272809">
        <id>Q8K4I3</id>
        <label>Arhgef6</label>
    </interactant>
    <organismsDiffer>true</organismsDiffer>
    <experiments>3</experiments>
</comment>
<comment type="interaction">
    <interactant intactId="EBI-1047679">
        <id>Q9HBI1</id>
    </interactant>
    <interactant intactId="EBI-642580">
        <id>Q9ES28</id>
        <label>Arhgef7</label>
    </interactant>
    <organismsDiffer>true</organismsDiffer>
    <experiments>10</experiments>
</comment>
<comment type="subcellular location">
    <subcellularLocation>
        <location>Cell junction</location>
        <location>Focal adhesion</location>
    </subcellularLocation>
    <subcellularLocation>
        <location>Cell membrane</location>
        <topology>Peripheral membrane protein</topology>
        <orientation>Cytoplasmic side</orientation>
    </subcellularLocation>
    <subcellularLocation>
        <location>Cytoplasm</location>
        <location>Cytoskeleton</location>
    </subcellularLocation>
    <subcellularLocation>
        <location>Cell projection</location>
        <location>Lamellipodium</location>
    </subcellularLocation>
    <subcellularLocation>
        <location>Cytoplasm</location>
        <location>Myofibril</location>
        <location>Sarcomere</location>
    </subcellularLocation>
    <subcellularLocation>
        <location>Cytoplasm</location>
        <location>Myofibril</location>
        <location>Sarcomere</location>
        <location>Z line</location>
    </subcellularLocation>
    <text>Constituent of focal adhesions. Detected at the tips of the leading edge of cells. Colocalizes with F-actin at the tips of lamellipodia.</text>
</comment>
<comment type="alternative products">
    <event type="alternative splicing"/>
    <isoform>
        <id>Q9HBI1-1</id>
        <name>1</name>
        <sequence type="displayed"/>
    </isoform>
    <isoform>
        <id>Q9HBI1-2</id>
        <name>2</name>
        <sequence type="described" ref="VSP_041336"/>
    </isoform>
    <isoform>
        <id>Q9HBI1-3</id>
        <name>3</name>
        <sequence type="described" ref="VSP_045555"/>
    </isoform>
</comment>
<comment type="tissue specificity">
    <text evidence="3 4">Expressed predominantly in heart and skeletal muscle.</text>
</comment>
<comment type="similarity">
    <text evidence="16">Belongs to the parvin family.</text>
</comment>
<comment type="sequence caution" evidence="16">
    <conflict type="frameshift">
        <sequence resource="EMBL-CDS" id="AAD34051"/>
    </conflict>
</comment>
<comment type="sequence caution" evidence="16">
    <conflict type="frameshift">
        <sequence resource="EMBL" id="BG743702"/>
    </conflict>
</comment>
<comment type="online information" name="Atlas of Genetics and Cytogenetics in Oncology and Haematology">
    <link uri="https://atlasgeneticsoncology.org/gene/46486/PARVB"/>
</comment>
<feature type="chain" id="PRO_0000121583" description="Beta-parvin">
    <location>
        <begin position="1"/>
        <end position="364"/>
    </location>
</feature>
<feature type="domain" description="Calponin-homology (CH) 1" evidence="1">
    <location>
        <begin position="87"/>
        <end position="194"/>
    </location>
</feature>
<feature type="domain" description="Calponin-homology (CH) 2" evidence="1">
    <location>
        <begin position="254"/>
        <end position="361"/>
    </location>
</feature>
<feature type="region of interest" description="Disordered" evidence="2">
    <location>
        <begin position="1"/>
        <end position="57"/>
    </location>
</feature>
<feature type="compositionally biased region" description="Basic and acidic residues" evidence="2">
    <location>
        <begin position="36"/>
        <end position="46"/>
    </location>
</feature>
<feature type="modified residue" description="Phosphoserine" evidence="18">
    <location>
        <position position="7"/>
    </location>
</feature>
<feature type="modified residue" description="Phosphoserine" evidence="17">
    <location>
        <position position="54"/>
    </location>
</feature>
<feature type="splice variant" id="VSP_045555" description="In isoform 3." evidence="14">
    <original>MSSAPRSPTPRPRRMKKDESFLGKLGGTLARKRRAREV</original>
    <variation>M</variation>
    <location>
        <begin position="1"/>
        <end position="38"/>
    </location>
</feature>
<feature type="splice variant" id="VSP_041336" description="In isoform 2." evidence="14 15">
    <original>MSSAPRSPTPRPRRMKKDESFLGKLGGTLARKRRARE</original>
    <variation>MHHVFKDHQRGEKRGFLSPENKNCRRLELRRGCSCSWGLCSQALMASLAGSLLPGSDRSGVETSEYAQGG</variation>
    <location>
        <begin position="1"/>
        <end position="37"/>
    </location>
</feature>
<feature type="sequence variant" id="VAR_034369" description="In dbSNP:rs34476853.">
    <original>P</original>
    <variation>R</variation>
    <location>
        <position position="52"/>
    </location>
</feature>
<feature type="sequence variant" id="VAR_017242" description="In dbSNP:rs1983609." evidence="5 9 13 17">
    <original>V</original>
    <variation>A</variation>
    <location>
        <position position="58"/>
    </location>
</feature>
<feature type="mutagenesis site" description="Abolishes interaction with PXN." evidence="12">
    <original>V</original>
    <variation>Q</variation>
    <location>
        <position position="256"/>
    </location>
</feature>
<feature type="mutagenesis site" description="Abolishes interaction with ILK. Abolishes location at focal adhesion sites." evidence="12">
    <original>F</original>
    <variation>D</variation>
    <location>
        <position position="299"/>
    </location>
</feature>
<feature type="sequence conflict" description="In Ref. 4; AAD34051." evidence="16" ref="4">
    <original>G</original>
    <variation>V</variation>
    <location>
        <position position="27"/>
    </location>
</feature>
<feature type="sequence conflict" description="In Ref. 4; AAD34051." evidence="16" ref="4">
    <original>D</original>
    <variation>M</variation>
    <location>
        <position position="59"/>
    </location>
</feature>
<feature type="sequence conflict" description="In Ref. 4; AAD34051." evidence="16" ref="4">
    <original>T</original>
    <variation>P</variation>
    <location>
        <position position="349"/>
    </location>
</feature>
<feature type="helix" evidence="19">
    <location>
        <begin position="243"/>
        <end position="246"/>
    </location>
</feature>
<feature type="helix" evidence="20">
    <location>
        <begin position="250"/>
        <end position="252"/>
    </location>
</feature>
<feature type="helix" evidence="19">
    <location>
        <begin position="254"/>
        <end position="268"/>
    </location>
</feature>
<feature type="helix" evidence="19">
    <location>
        <begin position="269"/>
        <end position="271"/>
    </location>
</feature>
<feature type="turn" evidence="19">
    <location>
        <begin position="278"/>
        <end position="284"/>
    </location>
</feature>
<feature type="helix" evidence="19">
    <location>
        <begin position="286"/>
        <end position="295"/>
    </location>
</feature>
<feature type="helix" evidence="19">
    <location>
        <begin position="302"/>
        <end position="304"/>
    </location>
</feature>
<feature type="helix" evidence="19">
    <location>
        <begin position="312"/>
        <end position="328"/>
    </location>
</feature>
<feature type="helix" evidence="19">
    <location>
        <begin position="338"/>
        <end position="342"/>
    </location>
</feature>
<feature type="helix" evidence="19">
    <location>
        <begin position="346"/>
        <end position="360"/>
    </location>
</feature>
<feature type="sequence conflict" description="In Ref. 8; BG743702." evidence="16" ref="8">
    <original>V</original>
    <variation>G</variation>
    <location sequence="Q9HBI1-2">
        <position position="4"/>
    </location>
</feature>
<feature type="sequence conflict" description="In Ref. 1; AAL08219." evidence="16" ref="1">
    <original>N</original>
    <variation>K</variation>
    <location sequence="Q9HBI1-2">
        <position position="21"/>
    </location>
</feature>
<feature type="sequence conflict" description="In Ref. 1; AAL08219." evidence="16" ref="1">
    <original>W</original>
    <variation>R</variation>
    <location sequence="Q9HBI1-2">
        <position position="37"/>
    </location>
</feature>
<proteinExistence type="evidence at protein level"/>
<gene>
    <name type="primary">PARVB</name>
    <name type="ORF">CGI-56</name>
</gene>
<organism>
    <name type="scientific">Homo sapiens</name>
    <name type="common">Human</name>
    <dbReference type="NCBI Taxonomy" id="9606"/>
    <lineage>
        <taxon>Eukaryota</taxon>
        <taxon>Metazoa</taxon>
        <taxon>Chordata</taxon>
        <taxon>Craniata</taxon>
        <taxon>Vertebrata</taxon>
        <taxon>Euteleostomi</taxon>
        <taxon>Mammalia</taxon>
        <taxon>Eutheria</taxon>
        <taxon>Euarchontoglires</taxon>
        <taxon>Primates</taxon>
        <taxon>Haplorrhini</taxon>
        <taxon>Catarrhini</taxon>
        <taxon>Hominidae</taxon>
        <taxon>Homo</taxon>
    </lineage>
</organism>
<reference key="1">
    <citation type="submission" date="2000-09" db="EMBL/GenBank/DDBJ databases">
        <title>CLINT, Calponin homology domain protein binding to integrin-linked kinase, ILK1.</title>
        <authorList>
            <person name="Carnio L."/>
            <person name="Hannigan G.E."/>
        </authorList>
    </citation>
    <scope>NUCLEOTIDE SEQUENCE [MRNA] (ISOFORM 2)</scope>
    <scope>VARIANT ALA-58</scope>
    <source>
        <tissue>Skeletal muscle</tissue>
    </source>
</reference>
<reference key="2">
    <citation type="journal article" date="2001" name="J. Cell Biol.">
        <title>A novel integrin-linked kinase-binding protein, affixin, is involved in the early stage of cell-substrate interaction.</title>
        <authorList>
            <person name="Yamaji S."/>
            <person name="Suzuki A."/>
            <person name="Sugiyama Y."/>
            <person name="Koide Y."/>
            <person name="Yoshida M."/>
            <person name="Kanamori H."/>
            <person name="Mohri H."/>
            <person name="Ohno S."/>
            <person name="Ishigatsubo Y."/>
        </authorList>
    </citation>
    <scope>NUCLEOTIDE SEQUENCE [MRNA] (ISOFORM 1)</scope>
    <scope>FUNCTION</scope>
    <scope>INTERACTION WITH ILK</scope>
    <scope>SUBCELLULAR LOCATION</scope>
    <scope>PHOSPHORYLATION</scope>
    <scope>TISSUE SPECIFICITY</scope>
</reference>
<reference key="3">
    <citation type="journal article" date="2001" name="J. Cell Sci.">
        <title>Parvin, a 42 kDa focal adhesion protein, related to the alpha-actinin superfamily.</title>
        <authorList>
            <person name="Olski T.M."/>
            <person name="Noegel A.A."/>
            <person name="Korenbaum E."/>
        </authorList>
    </citation>
    <scope>NUCLEOTIDE SEQUENCE [MRNA] (ISOFORM 1)</scope>
</reference>
<reference key="4">
    <citation type="journal article" date="2000" name="Genome Res.">
        <title>Identification of novel human genes evolutionarily conserved in Caenorhabditis elegans by comparative proteomics.</title>
        <authorList>
            <person name="Lai C.-H."/>
            <person name="Chou C.-Y."/>
            <person name="Ch'ang L.-Y."/>
            <person name="Liu C.-S."/>
            <person name="Lin W.-C."/>
        </authorList>
    </citation>
    <scope>NUCLEOTIDE SEQUENCE [LARGE SCALE MRNA] (ISOFORM 1)</scope>
</reference>
<reference key="5">
    <citation type="journal article" date="2004" name="Nat. Genet.">
        <title>Complete sequencing and characterization of 21,243 full-length human cDNAs.</title>
        <authorList>
            <person name="Ota T."/>
            <person name="Suzuki Y."/>
            <person name="Nishikawa T."/>
            <person name="Otsuki T."/>
            <person name="Sugiyama T."/>
            <person name="Irie R."/>
            <person name="Wakamatsu A."/>
            <person name="Hayashi K."/>
            <person name="Sato H."/>
            <person name="Nagai K."/>
            <person name="Kimura K."/>
            <person name="Makita H."/>
            <person name="Sekine M."/>
            <person name="Obayashi M."/>
            <person name="Nishi T."/>
            <person name="Shibahara T."/>
            <person name="Tanaka T."/>
            <person name="Ishii S."/>
            <person name="Yamamoto J."/>
            <person name="Saito K."/>
            <person name="Kawai Y."/>
            <person name="Isono Y."/>
            <person name="Nakamura Y."/>
            <person name="Nagahari K."/>
            <person name="Murakami K."/>
            <person name="Yasuda T."/>
            <person name="Iwayanagi T."/>
            <person name="Wagatsuma M."/>
            <person name="Shiratori A."/>
            <person name="Sudo H."/>
            <person name="Hosoiri T."/>
            <person name="Kaku Y."/>
            <person name="Kodaira H."/>
            <person name="Kondo H."/>
            <person name="Sugawara M."/>
            <person name="Takahashi M."/>
            <person name="Kanda K."/>
            <person name="Yokoi T."/>
            <person name="Furuya T."/>
            <person name="Kikkawa E."/>
            <person name="Omura Y."/>
            <person name="Abe K."/>
            <person name="Kamihara K."/>
            <person name="Katsuta N."/>
            <person name="Sato K."/>
            <person name="Tanikawa M."/>
            <person name="Yamazaki M."/>
            <person name="Ninomiya K."/>
            <person name="Ishibashi T."/>
            <person name="Yamashita H."/>
            <person name="Murakawa K."/>
            <person name="Fujimori K."/>
            <person name="Tanai H."/>
            <person name="Kimata M."/>
            <person name="Watanabe M."/>
            <person name="Hiraoka S."/>
            <person name="Chiba Y."/>
            <person name="Ishida S."/>
            <person name="Ono Y."/>
            <person name="Takiguchi S."/>
            <person name="Watanabe S."/>
            <person name="Yosida M."/>
            <person name="Hotuta T."/>
            <person name="Kusano J."/>
            <person name="Kanehori K."/>
            <person name="Takahashi-Fujii A."/>
            <person name="Hara H."/>
            <person name="Tanase T.-O."/>
            <person name="Nomura Y."/>
            <person name="Togiya S."/>
            <person name="Komai F."/>
            <person name="Hara R."/>
            <person name="Takeuchi K."/>
            <person name="Arita M."/>
            <person name="Imose N."/>
            <person name="Musashino K."/>
            <person name="Yuuki H."/>
            <person name="Oshima A."/>
            <person name="Sasaki N."/>
            <person name="Aotsuka S."/>
            <person name="Yoshikawa Y."/>
            <person name="Matsunawa H."/>
            <person name="Ichihara T."/>
            <person name="Shiohata N."/>
            <person name="Sano S."/>
            <person name="Moriya S."/>
            <person name="Momiyama H."/>
            <person name="Satoh N."/>
            <person name="Takami S."/>
            <person name="Terashima Y."/>
            <person name="Suzuki O."/>
            <person name="Nakagawa S."/>
            <person name="Senoh A."/>
            <person name="Mizoguchi H."/>
            <person name="Goto Y."/>
            <person name="Shimizu F."/>
            <person name="Wakebe H."/>
            <person name="Hishigaki H."/>
            <person name="Watanabe T."/>
            <person name="Sugiyama A."/>
            <person name="Takemoto M."/>
            <person name="Kawakami B."/>
            <person name="Yamazaki M."/>
            <person name="Watanabe K."/>
            <person name="Kumagai A."/>
            <person name="Itakura S."/>
            <person name="Fukuzumi Y."/>
            <person name="Fujimori Y."/>
            <person name="Komiyama M."/>
            <person name="Tashiro H."/>
            <person name="Tanigami A."/>
            <person name="Fujiwara T."/>
            <person name="Ono T."/>
            <person name="Yamada K."/>
            <person name="Fujii Y."/>
            <person name="Ozaki K."/>
            <person name="Hirao M."/>
            <person name="Ohmori Y."/>
            <person name="Kawabata A."/>
            <person name="Hikiji T."/>
            <person name="Kobatake N."/>
            <person name="Inagaki H."/>
            <person name="Ikema Y."/>
            <person name="Okamoto S."/>
            <person name="Okitani R."/>
            <person name="Kawakami T."/>
            <person name="Noguchi S."/>
            <person name="Itoh T."/>
            <person name="Shigeta K."/>
            <person name="Senba T."/>
            <person name="Matsumura K."/>
            <person name="Nakajima Y."/>
            <person name="Mizuno T."/>
            <person name="Morinaga M."/>
            <person name="Sasaki M."/>
            <person name="Togashi T."/>
            <person name="Oyama M."/>
            <person name="Hata H."/>
            <person name="Watanabe M."/>
            <person name="Komatsu T."/>
            <person name="Mizushima-Sugano J."/>
            <person name="Satoh T."/>
            <person name="Shirai Y."/>
            <person name="Takahashi Y."/>
            <person name="Nakagawa K."/>
            <person name="Okumura K."/>
            <person name="Nagase T."/>
            <person name="Nomura N."/>
            <person name="Kikuchi H."/>
            <person name="Masuho Y."/>
            <person name="Yamashita R."/>
            <person name="Nakai K."/>
            <person name="Yada T."/>
            <person name="Nakamura Y."/>
            <person name="Ohara O."/>
            <person name="Isogai T."/>
            <person name="Sugano S."/>
        </authorList>
    </citation>
    <scope>NUCLEOTIDE SEQUENCE [LARGE SCALE MRNA] (ISOFORM 1)</scope>
    <scope>VARIANT ALA-58</scope>
    <source>
        <tissue>Colon</tissue>
    </source>
</reference>
<reference key="6">
    <citation type="journal article" date="1999" name="Nature">
        <title>The DNA sequence of human chromosome 22.</title>
        <authorList>
            <person name="Dunham I."/>
            <person name="Hunt A.R."/>
            <person name="Collins J.E."/>
            <person name="Bruskiewich R."/>
            <person name="Beare D.M."/>
            <person name="Clamp M."/>
            <person name="Smink L.J."/>
            <person name="Ainscough R."/>
            <person name="Almeida J.P."/>
            <person name="Babbage A.K."/>
            <person name="Bagguley C."/>
            <person name="Bailey J."/>
            <person name="Barlow K.F."/>
            <person name="Bates K.N."/>
            <person name="Beasley O.P."/>
            <person name="Bird C.P."/>
            <person name="Blakey S.E."/>
            <person name="Bridgeman A.M."/>
            <person name="Buck D."/>
            <person name="Burgess J."/>
            <person name="Burrill W.D."/>
            <person name="Burton J."/>
            <person name="Carder C."/>
            <person name="Carter N.P."/>
            <person name="Chen Y."/>
            <person name="Clark G."/>
            <person name="Clegg S.M."/>
            <person name="Cobley V.E."/>
            <person name="Cole C.G."/>
            <person name="Collier R.E."/>
            <person name="Connor R."/>
            <person name="Conroy D."/>
            <person name="Corby N.R."/>
            <person name="Coville G.J."/>
            <person name="Cox A.V."/>
            <person name="Davis J."/>
            <person name="Dawson E."/>
            <person name="Dhami P.D."/>
            <person name="Dockree C."/>
            <person name="Dodsworth S.J."/>
            <person name="Durbin R.M."/>
            <person name="Ellington A.G."/>
            <person name="Evans K.L."/>
            <person name="Fey J.M."/>
            <person name="Fleming K."/>
            <person name="French L."/>
            <person name="Garner A.A."/>
            <person name="Gilbert J.G.R."/>
            <person name="Goward M.E."/>
            <person name="Grafham D.V."/>
            <person name="Griffiths M.N.D."/>
            <person name="Hall C."/>
            <person name="Hall R.E."/>
            <person name="Hall-Tamlyn G."/>
            <person name="Heathcott R.W."/>
            <person name="Ho S."/>
            <person name="Holmes S."/>
            <person name="Hunt S.E."/>
            <person name="Jones M.C."/>
            <person name="Kershaw J."/>
            <person name="Kimberley A.M."/>
            <person name="King A."/>
            <person name="Laird G.K."/>
            <person name="Langford C.F."/>
            <person name="Leversha M.A."/>
            <person name="Lloyd C."/>
            <person name="Lloyd D.M."/>
            <person name="Martyn I.D."/>
            <person name="Mashreghi-Mohammadi M."/>
            <person name="Matthews L.H."/>
            <person name="Mccann O.T."/>
            <person name="Mcclay J."/>
            <person name="Mclaren S."/>
            <person name="McMurray A.A."/>
            <person name="Milne S.A."/>
            <person name="Mortimore B.J."/>
            <person name="Odell C.N."/>
            <person name="Pavitt R."/>
            <person name="Pearce A.V."/>
            <person name="Pearson D."/>
            <person name="Phillimore B.J.C.T."/>
            <person name="Phillips S.H."/>
            <person name="Plumb R.W."/>
            <person name="Ramsay H."/>
            <person name="Ramsey Y."/>
            <person name="Rogers L."/>
            <person name="Ross M.T."/>
            <person name="Scott C.E."/>
            <person name="Sehra H.K."/>
            <person name="Skuce C.D."/>
            <person name="Smalley S."/>
            <person name="Smith M.L."/>
            <person name="Soderlund C."/>
            <person name="Spragon L."/>
            <person name="Steward C.A."/>
            <person name="Sulston J.E."/>
            <person name="Swann R.M."/>
            <person name="Vaudin M."/>
            <person name="Wall M."/>
            <person name="Wallis J.M."/>
            <person name="Whiteley M.N."/>
            <person name="Willey D.L."/>
            <person name="Williams L."/>
            <person name="Williams S.A."/>
            <person name="Williamson H."/>
            <person name="Wilmer T.E."/>
            <person name="Wilming L."/>
            <person name="Wright C.L."/>
            <person name="Hubbard T."/>
            <person name="Bentley D.R."/>
            <person name="Beck S."/>
            <person name="Rogers J."/>
            <person name="Shimizu N."/>
            <person name="Minoshima S."/>
            <person name="Kawasaki K."/>
            <person name="Sasaki T."/>
            <person name="Asakawa S."/>
            <person name="Kudoh J."/>
            <person name="Shintani A."/>
            <person name="Shibuya K."/>
            <person name="Yoshizaki Y."/>
            <person name="Aoki N."/>
            <person name="Mitsuyama S."/>
            <person name="Roe B.A."/>
            <person name="Chen F."/>
            <person name="Chu L."/>
            <person name="Crabtree J."/>
            <person name="Deschamps S."/>
            <person name="Do A."/>
            <person name="Do T."/>
            <person name="Dorman A."/>
            <person name="Fang F."/>
            <person name="Fu Y."/>
            <person name="Hu P."/>
            <person name="Hua A."/>
            <person name="Kenton S."/>
            <person name="Lai H."/>
            <person name="Lao H.I."/>
            <person name="Lewis J."/>
            <person name="Lewis S."/>
            <person name="Lin S.-P."/>
            <person name="Loh P."/>
            <person name="Malaj E."/>
            <person name="Nguyen T."/>
            <person name="Pan H."/>
            <person name="Phan S."/>
            <person name="Qi S."/>
            <person name="Qian Y."/>
            <person name="Ray L."/>
            <person name="Ren Q."/>
            <person name="Shaull S."/>
            <person name="Sloan D."/>
            <person name="Song L."/>
            <person name="Wang Q."/>
            <person name="Wang Y."/>
            <person name="Wang Z."/>
            <person name="White J."/>
            <person name="Willingham D."/>
            <person name="Wu H."/>
            <person name="Yao Z."/>
            <person name="Zhan M."/>
            <person name="Zhang G."/>
            <person name="Chissoe S."/>
            <person name="Murray J."/>
            <person name="Miller N."/>
            <person name="Minx P."/>
            <person name="Fulton R."/>
            <person name="Johnson D."/>
            <person name="Bemis G."/>
            <person name="Bentley D."/>
            <person name="Bradshaw H."/>
            <person name="Bourne S."/>
            <person name="Cordes M."/>
            <person name="Du Z."/>
            <person name="Fulton L."/>
            <person name="Goela D."/>
            <person name="Graves T."/>
            <person name="Hawkins J."/>
            <person name="Hinds K."/>
            <person name="Kemp K."/>
            <person name="Latreille P."/>
            <person name="Layman D."/>
            <person name="Ozersky P."/>
            <person name="Rohlfing T."/>
            <person name="Scheet P."/>
            <person name="Walker C."/>
            <person name="Wamsley A."/>
            <person name="Wohldmann P."/>
            <person name="Pepin K."/>
            <person name="Nelson J."/>
            <person name="Korf I."/>
            <person name="Bedell J.A."/>
            <person name="Hillier L.W."/>
            <person name="Mardis E."/>
            <person name="Waterston R."/>
            <person name="Wilson R."/>
            <person name="Emanuel B.S."/>
            <person name="Shaikh T."/>
            <person name="Kurahashi H."/>
            <person name="Saitta S."/>
            <person name="Budarf M.L."/>
            <person name="McDermid H.E."/>
            <person name="Johnson A."/>
            <person name="Wong A.C.C."/>
            <person name="Morrow B.E."/>
            <person name="Edelmann L."/>
            <person name="Kim U.J."/>
            <person name="Shizuya H."/>
            <person name="Simon M.I."/>
            <person name="Dumanski J.P."/>
            <person name="Peyrard M."/>
            <person name="Kedra D."/>
            <person name="Seroussi E."/>
            <person name="Fransson I."/>
            <person name="Tapia I."/>
            <person name="Bruder C.E."/>
            <person name="O'Brien K.P."/>
            <person name="Wilkinson P."/>
            <person name="Bodenteich A."/>
            <person name="Hartman K."/>
            <person name="Hu X."/>
            <person name="Khan A.S."/>
            <person name="Lane L."/>
            <person name="Tilahun Y."/>
            <person name="Wright H."/>
        </authorList>
    </citation>
    <scope>NUCLEOTIDE SEQUENCE [LARGE SCALE GENOMIC DNA]</scope>
</reference>
<reference key="7">
    <citation type="submission" date="2005-07" db="EMBL/GenBank/DDBJ databases">
        <authorList>
            <person name="Mural R.J."/>
            <person name="Istrail S."/>
            <person name="Sutton G."/>
            <person name="Florea L."/>
            <person name="Halpern A.L."/>
            <person name="Mobarry C.M."/>
            <person name="Lippert R."/>
            <person name="Walenz B."/>
            <person name="Shatkay H."/>
            <person name="Dew I."/>
            <person name="Miller J.R."/>
            <person name="Flanigan M.J."/>
            <person name="Edwards N.J."/>
            <person name="Bolanos R."/>
            <person name="Fasulo D."/>
            <person name="Halldorsson B.V."/>
            <person name="Hannenhalli S."/>
            <person name="Turner R."/>
            <person name="Yooseph S."/>
            <person name="Lu F."/>
            <person name="Nusskern D.R."/>
            <person name="Shue B.C."/>
            <person name="Zheng X.H."/>
            <person name="Zhong F."/>
            <person name="Delcher A.L."/>
            <person name="Huson D.H."/>
            <person name="Kravitz S.A."/>
            <person name="Mouchard L."/>
            <person name="Reinert K."/>
            <person name="Remington K.A."/>
            <person name="Clark A.G."/>
            <person name="Waterman M.S."/>
            <person name="Eichler E.E."/>
            <person name="Adams M.D."/>
            <person name="Hunkapiller M.W."/>
            <person name="Myers E.W."/>
            <person name="Venter J.C."/>
        </authorList>
    </citation>
    <scope>NUCLEOTIDE SEQUENCE [LARGE SCALE GENOMIC DNA]</scope>
</reference>
<reference key="8">
    <citation type="journal article" date="2004" name="Genome Res.">
        <title>The status, quality, and expansion of the NIH full-length cDNA project: the Mammalian Gene Collection (MGC).</title>
        <authorList>
            <consortium name="The MGC Project Team"/>
        </authorList>
    </citation>
    <scope>NUCLEOTIDE SEQUENCE [LARGE SCALE MRNA] (ISOFORMS 1 AND 3)</scope>
    <scope>NUCLEOTIDE SEQUENCE [LARGE SCALE MRNA] OF 1-238 (ISOFORM 2)</scope>
    <scope>VARIANT ALA-58</scope>
    <source>
        <tissue>Brain</tissue>
        <tissue>Leukocyte</tissue>
        <tissue>Skin</tissue>
    </source>
</reference>
<reference key="9">
    <citation type="journal article" date="2003" name="Genome Res.">
        <title>Reevaluating human gene annotation: a second-generation analysis of chromosome 22.</title>
        <authorList>
            <person name="Collins J.E."/>
            <person name="Goward M.E."/>
            <person name="Cole C.G."/>
            <person name="Smink L.J."/>
            <person name="Huckle E.J."/>
            <person name="Knowles S."/>
            <person name="Bye J.M."/>
            <person name="Beare D.M."/>
            <person name="Dunham I."/>
        </authorList>
    </citation>
    <scope>NUCLEOTIDE SEQUENCE [LARGE SCALE MRNA] OF 15-364 (ISOFORM 1)</scope>
</reference>
<reference key="10">
    <citation type="journal article" date="2001" name="Gene">
        <title>Genomic organization and expression profile of the parvin family of focal adhesion proteins in mice and humans.</title>
        <authorList>
            <person name="Korenbaum E."/>
            <person name="Olski T.M."/>
            <person name="Noegel A.A."/>
        </authorList>
    </citation>
    <scope>TISSUE SPECIFICITY</scope>
</reference>
<reference key="11">
    <citation type="journal article" date="2004" name="Genes Cells">
        <title>The first CH domain of affixin activates Cdc42 and Rac1 through alphaPIX, a Cdc42/Rac1-specific guanine nucleotide exchanging factor.</title>
        <authorList>
            <person name="Mishima W."/>
            <person name="Suzuki A."/>
            <person name="Yamaji S."/>
            <person name="Yoshimi R."/>
            <person name="Ueda A."/>
            <person name="Kaneko T."/>
            <person name="Tanaka J."/>
            <person name="Miwa Y."/>
            <person name="Ohno S."/>
            <person name="Ishigatsubo Y."/>
        </authorList>
    </citation>
    <scope>FUNCTION</scope>
    <scope>INTERACTION WITH ARHGEF6</scope>
</reference>
<reference key="12">
    <citation type="journal article" date="2004" name="J. Biol. Chem.">
        <title>Distinct roles of two structurally closely related focal adhesion proteins, alpha-parvins and beta-parvins, in regulation of cell morphology and survival.</title>
        <authorList>
            <person name="Zhang Y."/>
            <person name="Chen K."/>
            <person name="Tu Y."/>
            <person name="Wu C."/>
        </authorList>
    </citation>
    <scope>FUNCTION</scope>
    <scope>INTERACTION WITH ILK</scope>
</reference>
<reference key="13">
    <citation type="journal article" date="2004" name="J. Cell Biol.">
        <title>Affixin interacts with alpha-actinin and mediates integrin signaling for reorganization of F-actin induced by initial cell-substrate interaction.</title>
        <authorList>
            <person name="Yamaji S."/>
            <person name="Suzuki A."/>
            <person name="Kanamori H."/>
            <person name="Mishima W."/>
            <person name="Yoshimi R."/>
            <person name="Takasaki H."/>
            <person name="Takabayashi M."/>
            <person name="Fujimaki K."/>
            <person name="Fujisawa S."/>
            <person name="Ohno S."/>
            <person name="Ishigatsubo Y."/>
        </authorList>
    </citation>
    <scope>INTERACTION WITH ACTN2</scope>
    <scope>SUBCELLULAR LOCATION</scope>
    <scope>FUNCTION</scope>
</reference>
<reference key="14">
    <citation type="journal article" date="2005" name="J. Neuropathol. Exp. Neurol.">
        <title>Dysferlin interacts with affixin (beta-parvin) at the sarcolemma.</title>
        <authorList>
            <person name="Matsuda C."/>
            <person name="Kameyama K."/>
            <person name="Tagawa K."/>
            <person name="Ogawa M."/>
            <person name="Suzuki A."/>
            <person name="Yamaji S."/>
            <person name="Okamoto H."/>
            <person name="Nishino I."/>
            <person name="Hayashi Y.K."/>
        </authorList>
    </citation>
    <scope>INTERACTION WITH DYSF</scope>
</reference>
<reference key="15">
    <citation type="journal article" date="2008" name="FEBS Lett.">
        <title>Affixin activates Rac1 via betaPIX in C2C12 myoblast.</title>
        <authorList>
            <person name="Matsuda C."/>
            <person name="Kameyama K."/>
            <person name="Suzuki A."/>
            <person name="Mishima W."/>
            <person name="Yamaji S."/>
            <person name="Okamoto H."/>
            <person name="Nishino I."/>
            <person name="Hayashi Y.K."/>
        </authorList>
    </citation>
    <scope>FUNCTION</scope>
    <scope>SUBCELLULAR LOCATION</scope>
    <scope>INTERACTION WITH ARHGEF6 AND ARHGEF7</scope>
</reference>
<reference key="16">
    <citation type="journal article" date="2008" name="Mol. Cell">
        <title>Kinase-selective enrichment enables quantitative phosphoproteomics of the kinome across the cell cycle.</title>
        <authorList>
            <person name="Daub H."/>
            <person name="Olsen J.V."/>
            <person name="Bairlein M."/>
            <person name="Gnad F."/>
            <person name="Oppermann F.S."/>
            <person name="Korner R."/>
            <person name="Greff Z."/>
            <person name="Keri G."/>
            <person name="Stemmann O."/>
            <person name="Mann M."/>
        </authorList>
    </citation>
    <scope>PHOSPHORYLATION [LARGE SCALE ANALYSIS] AT SER-54</scope>
    <scope>VARIANT [LARGE SCALE ANALYSIS] ALA-58</scope>
    <scope>IDENTIFICATION BY MASS SPECTROMETRY [LARGE SCALE ANALYSIS]</scope>
    <source>
        <tissue>Cervix carcinoma</tissue>
    </source>
</reference>
<reference key="17">
    <citation type="journal article" date="2011" name="BMC Syst. Biol.">
        <title>Initial characterization of the human central proteome.</title>
        <authorList>
            <person name="Burkard T.R."/>
            <person name="Planyavsky M."/>
            <person name="Kaupe I."/>
            <person name="Breitwieser F.P."/>
            <person name="Buerckstuemmer T."/>
            <person name="Bennett K.L."/>
            <person name="Superti-Furga G."/>
            <person name="Colinge J."/>
        </authorList>
    </citation>
    <scope>IDENTIFICATION BY MASS SPECTROMETRY [LARGE SCALE ANALYSIS]</scope>
</reference>
<reference key="18">
    <citation type="journal article" date="2012" name="Proc. Natl. Acad. Sci. U.S.A.">
        <title>N-terminal acetylome analyses and functional insights of the N-terminal acetyltransferase NatB.</title>
        <authorList>
            <person name="Van Damme P."/>
            <person name="Lasa M."/>
            <person name="Polevoda B."/>
            <person name="Gazquez C."/>
            <person name="Elosegui-Artola A."/>
            <person name="Kim D.S."/>
            <person name="De Juan-Pardo E."/>
            <person name="Demeyer K."/>
            <person name="Hole K."/>
            <person name="Larrea E."/>
            <person name="Timmerman E."/>
            <person name="Prieto J."/>
            <person name="Arnesen T."/>
            <person name="Sherman F."/>
            <person name="Gevaert K."/>
            <person name="Aldabe R."/>
        </authorList>
    </citation>
    <scope>IDENTIFICATION BY MASS SPECTROMETRY [LARGE SCALE ANALYSIS]</scope>
</reference>
<reference key="19">
    <citation type="journal article" date="2013" name="J. Proteome Res.">
        <title>Toward a comprehensive characterization of a human cancer cell phosphoproteome.</title>
        <authorList>
            <person name="Zhou H."/>
            <person name="Di Palma S."/>
            <person name="Preisinger C."/>
            <person name="Peng M."/>
            <person name="Polat A.N."/>
            <person name="Heck A.J."/>
            <person name="Mohammed S."/>
        </authorList>
    </citation>
    <scope>PHOSPHORYLATION [LARGE SCALE ANALYSIS] AT SER-7</scope>
    <scope>IDENTIFICATION BY MASS SPECTROMETRY [LARGE SCALE ANALYSIS]</scope>
    <source>
        <tissue>Erythroleukemia</tissue>
    </source>
</reference>
<reference key="20">
    <citation type="journal article" date="2012" name="J. Biol. Chem.">
        <title>Structural basis for paxillin binding and focal adhesion targeting of beta-parvin.</title>
        <authorList>
            <person name="Stiegler A.L."/>
            <person name="Draheim K.M."/>
            <person name="Li X."/>
            <person name="Chayen N.E."/>
            <person name="Calderwood D.A."/>
            <person name="Boggon T.J."/>
        </authorList>
    </citation>
    <scope>X-RAY CRYSTALLOGRAPHY (2.0 ANGSTROMS) OF 235-364 IN COMPLEX WITH PXN</scope>
    <scope>SUBCELLULAR LOCATION</scope>
    <scope>MUTAGENESIS OF VAL-256 AND PHE-299</scope>
    <scope>INTERACTION WITH ILK AND PXN</scope>
</reference>
<accession>Q9HBI1</accession>
<accession>B0QYM8</accession>
<accession>B0QYN1</accession>
<accession>B2R9X6</accession>
<accession>Q5TGJ5</accession>
<accession>Q86X93</accession>
<accession>Q96PN1</accession>
<accession>Q9NSP7</accession>
<accession>Q9UGT3</accession>
<accession>Q9Y368</accession>
<accession>Q9Y3L6</accession>
<accession>Q9Y3L7</accession>
<keyword id="KW-0002">3D-structure</keyword>
<keyword id="KW-0009">Actin-binding</keyword>
<keyword id="KW-0025">Alternative splicing</keyword>
<keyword id="KW-0130">Cell adhesion</keyword>
<keyword id="KW-0965">Cell junction</keyword>
<keyword id="KW-1003">Cell membrane</keyword>
<keyword id="KW-0966">Cell projection</keyword>
<keyword id="KW-0963">Cytoplasm</keyword>
<keyword id="KW-0206">Cytoskeleton</keyword>
<keyword id="KW-0472">Membrane</keyword>
<keyword id="KW-0597">Phosphoprotein</keyword>
<keyword id="KW-1267">Proteomics identification</keyword>
<keyword id="KW-1185">Reference proteome</keyword>
<keyword id="KW-0677">Repeat</keyword>
<evidence type="ECO:0000255" key="1">
    <source>
        <dbReference type="PROSITE-ProRule" id="PRU00044"/>
    </source>
</evidence>
<evidence type="ECO:0000256" key="2">
    <source>
        <dbReference type="SAM" id="MobiDB-lite"/>
    </source>
</evidence>
<evidence type="ECO:0000269" key="3">
    <source>
    </source>
</evidence>
<evidence type="ECO:0000269" key="4">
    <source>
    </source>
</evidence>
<evidence type="ECO:0000269" key="5">
    <source>
    </source>
</evidence>
<evidence type="ECO:0000269" key="6">
    <source>
    </source>
</evidence>
<evidence type="ECO:0000269" key="7">
    <source>
    </source>
</evidence>
<evidence type="ECO:0000269" key="8">
    <source>
    </source>
</evidence>
<evidence type="ECO:0000269" key="9">
    <source>
    </source>
</evidence>
<evidence type="ECO:0000269" key="10">
    <source>
    </source>
</evidence>
<evidence type="ECO:0000269" key="11">
    <source>
    </source>
</evidence>
<evidence type="ECO:0000269" key="12">
    <source>
    </source>
</evidence>
<evidence type="ECO:0000269" key="13">
    <source ref="1"/>
</evidence>
<evidence type="ECO:0000303" key="14">
    <source>
    </source>
</evidence>
<evidence type="ECO:0000303" key="15">
    <source ref="1"/>
</evidence>
<evidence type="ECO:0000305" key="16"/>
<evidence type="ECO:0007744" key="17">
    <source>
    </source>
</evidence>
<evidence type="ECO:0007744" key="18">
    <source>
    </source>
</evidence>
<evidence type="ECO:0007829" key="19">
    <source>
        <dbReference type="PDB" id="4EDM"/>
    </source>
</evidence>
<evidence type="ECO:0007829" key="20">
    <source>
        <dbReference type="PDB" id="4EDN"/>
    </source>
</evidence>
<dbReference type="EMBL" id="AF303887">
    <property type="protein sequence ID" value="AAL08219.1"/>
    <property type="molecule type" value="mRNA"/>
</dbReference>
<dbReference type="EMBL" id="AB048276">
    <property type="protein sequence ID" value="BAB62077.1"/>
    <property type="molecule type" value="mRNA"/>
</dbReference>
<dbReference type="EMBL" id="AF237769">
    <property type="protein sequence ID" value="AAG27171.1"/>
    <property type="molecule type" value="mRNA"/>
</dbReference>
<dbReference type="EMBL" id="AF151814">
    <property type="protein sequence ID" value="AAD34051.1"/>
    <property type="status" value="ALT_FRAME"/>
    <property type="molecule type" value="mRNA"/>
</dbReference>
<dbReference type="EMBL" id="AK313957">
    <property type="protein sequence ID" value="BAG36673.1"/>
    <property type="molecule type" value="mRNA"/>
</dbReference>
<dbReference type="EMBL" id="AL031595">
    <property type="status" value="NOT_ANNOTATED_CDS"/>
    <property type="molecule type" value="Genomic_DNA"/>
</dbReference>
<dbReference type="EMBL" id="AL033543">
    <property type="status" value="NOT_ANNOTATED_CDS"/>
    <property type="molecule type" value="Genomic_DNA"/>
</dbReference>
<dbReference type="EMBL" id="Z82178">
    <property type="status" value="NOT_ANNOTATED_CDS"/>
    <property type="molecule type" value="Genomic_DNA"/>
</dbReference>
<dbReference type="EMBL" id="Z82174">
    <property type="status" value="NOT_ANNOTATED_CDS"/>
    <property type="molecule type" value="Genomic_DNA"/>
</dbReference>
<dbReference type="EMBL" id="AL035398">
    <property type="status" value="NOT_ANNOTATED_CDS"/>
    <property type="molecule type" value="Genomic_DNA"/>
</dbReference>
<dbReference type="EMBL" id="CH471138">
    <property type="protein sequence ID" value="EAW73328.1"/>
    <property type="molecule type" value="Genomic_DNA"/>
</dbReference>
<dbReference type="EMBL" id="BC039811">
    <property type="status" value="NOT_ANNOTATED_CDS"/>
    <property type="molecule type" value="mRNA"/>
</dbReference>
<dbReference type="EMBL" id="BC046103">
    <property type="protein sequence ID" value="AAH46103.2"/>
    <property type="molecule type" value="mRNA"/>
</dbReference>
<dbReference type="EMBL" id="BG743702">
    <property type="status" value="NOT_ANNOTATED_CDS"/>
    <property type="molecule type" value="mRNA"/>
</dbReference>
<dbReference type="EMBL" id="AL159142">
    <property type="protein sequence ID" value="CAB76900.1"/>
    <property type="molecule type" value="mRNA"/>
</dbReference>
<dbReference type="CCDS" id="CCDS14056.1">
    <molecule id="Q9HBI1-1"/>
</dbReference>
<dbReference type="CCDS" id="CCDS46724.1">
    <molecule id="Q9HBI1-2"/>
</dbReference>
<dbReference type="CCDS" id="CCDS58808.1">
    <molecule id="Q9HBI1-3"/>
</dbReference>
<dbReference type="RefSeq" id="NP_001003828.1">
    <molecule id="Q9HBI1-2"/>
    <property type="nucleotide sequence ID" value="NM_001003828.3"/>
</dbReference>
<dbReference type="RefSeq" id="NP_001230314.1">
    <molecule id="Q9HBI1-3"/>
    <property type="nucleotide sequence ID" value="NM_001243385.2"/>
</dbReference>
<dbReference type="RefSeq" id="NP_001230315.1">
    <property type="nucleotide sequence ID" value="NM_001243386.1"/>
</dbReference>
<dbReference type="RefSeq" id="NP_037459.2">
    <molecule id="Q9HBI1-1"/>
    <property type="nucleotide sequence ID" value="NM_013327.4"/>
</dbReference>
<dbReference type="RefSeq" id="XP_024308005.1">
    <molecule id="Q9HBI1-3"/>
    <property type="nucleotide sequence ID" value="XM_024452237.2"/>
</dbReference>
<dbReference type="RefSeq" id="XP_047297305.1">
    <molecule id="Q9HBI1-3"/>
    <property type="nucleotide sequence ID" value="XM_047441349.1"/>
</dbReference>
<dbReference type="RefSeq" id="XP_047297306.1">
    <molecule id="Q9HBI1-3"/>
    <property type="nucleotide sequence ID" value="XM_047441350.1"/>
</dbReference>
<dbReference type="PDB" id="4EDL">
    <property type="method" value="X-ray"/>
    <property type="resolution" value="2.10 A"/>
    <property type="chains" value="A/B/C/D/E/F=235-364"/>
</dbReference>
<dbReference type="PDB" id="4EDM">
    <property type="method" value="X-ray"/>
    <property type="resolution" value="2.00 A"/>
    <property type="chains" value="A/B=235-364"/>
</dbReference>
<dbReference type="PDB" id="4EDN">
    <property type="method" value="X-ray"/>
    <property type="resolution" value="2.90 A"/>
    <property type="chains" value="A/B/C/D/E/F/G/H/I/J=235-364"/>
</dbReference>
<dbReference type="PDBsum" id="4EDL"/>
<dbReference type="PDBsum" id="4EDM"/>
<dbReference type="PDBsum" id="4EDN"/>
<dbReference type="SMR" id="Q9HBI1"/>
<dbReference type="BioGRID" id="118912">
    <property type="interactions" value="28"/>
</dbReference>
<dbReference type="ComplexPortal" id="CPX-10312">
    <property type="entry name" value="ILK-PINCH-Parvin complex, LIMS1-PARVB variant"/>
</dbReference>
<dbReference type="ComplexPortal" id="CPX-10314">
    <property type="entry name" value="ILK-PINCH-Parvin complex, LIMS2-PARVB variant"/>
</dbReference>
<dbReference type="CORUM" id="Q9HBI1"/>
<dbReference type="FunCoup" id="Q9HBI1">
    <property type="interactions" value="624"/>
</dbReference>
<dbReference type="IntAct" id="Q9HBI1">
    <property type="interactions" value="19"/>
</dbReference>
<dbReference type="MINT" id="Q9HBI1"/>
<dbReference type="STRING" id="9606.ENSP00000384515"/>
<dbReference type="iPTMnet" id="Q9HBI1"/>
<dbReference type="PhosphoSitePlus" id="Q9HBI1"/>
<dbReference type="SwissPalm" id="Q9HBI1"/>
<dbReference type="BioMuta" id="PARVB"/>
<dbReference type="DMDM" id="20139178"/>
<dbReference type="jPOST" id="Q9HBI1"/>
<dbReference type="MassIVE" id="Q9HBI1"/>
<dbReference type="PaxDb" id="9606-ENSP00000384515"/>
<dbReference type="PeptideAtlas" id="Q9HBI1"/>
<dbReference type="ProteomicsDB" id="2670"/>
<dbReference type="ProteomicsDB" id="81559">
    <molecule id="Q9HBI1-1"/>
</dbReference>
<dbReference type="ProteomicsDB" id="81560">
    <molecule id="Q9HBI1-2"/>
</dbReference>
<dbReference type="Pumba" id="Q9HBI1"/>
<dbReference type="Antibodypedia" id="27615">
    <property type="antibodies" value="239 antibodies from 28 providers"/>
</dbReference>
<dbReference type="DNASU" id="29780"/>
<dbReference type="Ensembl" id="ENST00000338758.12">
    <molecule id="Q9HBI1-1"/>
    <property type="protein sequence ID" value="ENSP00000342492.6"/>
    <property type="gene ID" value="ENSG00000188677.15"/>
</dbReference>
<dbReference type="Ensembl" id="ENST00000404989.1">
    <molecule id="Q9HBI1-3"/>
    <property type="protein sequence ID" value="ENSP00000384353.1"/>
    <property type="gene ID" value="ENSG00000188677.15"/>
</dbReference>
<dbReference type="Ensembl" id="ENST00000406477.7">
    <molecule id="Q9HBI1-2"/>
    <property type="protein sequence ID" value="ENSP00000384515.3"/>
    <property type="gene ID" value="ENSG00000188677.15"/>
</dbReference>
<dbReference type="GeneID" id="29780"/>
<dbReference type="KEGG" id="hsa:29780"/>
<dbReference type="MANE-Select" id="ENST00000338758.12">
    <property type="protein sequence ID" value="ENSP00000342492.6"/>
    <property type="RefSeq nucleotide sequence ID" value="NM_013327.5"/>
    <property type="RefSeq protein sequence ID" value="NP_037459.2"/>
</dbReference>
<dbReference type="UCSC" id="uc003bem.4">
    <molecule id="Q9HBI1-1"/>
    <property type="organism name" value="human"/>
</dbReference>
<dbReference type="AGR" id="HGNC:14653"/>
<dbReference type="CTD" id="29780"/>
<dbReference type="DisGeNET" id="29780"/>
<dbReference type="GeneCards" id="PARVB"/>
<dbReference type="HGNC" id="HGNC:14653">
    <property type="gene designation" value="PARVB"/>
</dbReference>
<dbReference type="HPA" id="ENSG00000188677">
    <property type="expression patterns" value="Tissue enhanced (skeletal muscle, tongue)"/>
</dbReference>
<dbReference type="MIM" id="608121">
    <property type="type" value="gene"/>
</dbReference>
<dbReference type="neXtProt" id="NX_Q9HBI1"/>
<dbReference type="OpenTargets" id="ENSG00000188677"/>
<dbReference type="PharmGKB" id="PA32951"/>
<dbReference type="VEuPathDB" id="HostDB:ENSG00000188677"/>
<dbReference type="eggNOG" id="KOG3631">
    <property type="taxonomic scope" value="Eukaryota"/>
</dbReference>
<dbReference type="GeneTree" id="ENSGT00950000183194"/>
<dbReference type="HOGENOM" id="CLU_047624_2_0_1"/>
<dbReference type="InParanoid" id="Q9HBI1"/>
<dbReference type="OMA" id="PHRMRKD"/>
<dbReference type="OrthoDB" id="2099265at2759"/>
<dbReference type="PAN-GO" id="Q9HBI1">
    <property type="GO annotations" value="9 GO annotations based on evolutionary models"/>
</dbReference>
<dbReference type="PhylomeDB" id="Q9HBI1"/>
<dbReference type="TreeFam" id="TF314025"/>
<dbReference type="PathwayCommons" id="Q9HBI1"/>
<dbReference type="Reactome" id="R-HSA-446353">
    <property type="pathway name" value="Cell-extracellular matrix interactions"/>
</dbReference>
<dbReference type="Reactome" id="R-HSA-446388">
    <property type="pathway name" value="Regulation of cytoskeletal remodeling and cell spreading by IPP complex components"/>
</dbReference>
<dbReference type="SignaLink" id="Q9HBI1"/>
<dbReference type="BioGRID-ORCS" id="29780">
    <property type="hits" value="21 hits in 1155 CRISPR screens"/>
</dbReference>
<dbReference type="ChiTaRS" id="PARVB">
    <property type="organism name" value="human"/>
</dbReference>
<dbReference type="EvolutionaryTrace" id="Q9HBI1"/>
<dbReference type="GeneWiki" id="PARVB"/>
<dbReference type="GenomeRNAi" id="29780"/>
<dbReference type="Pharos" id="Q9HBI1">
    <property type="development level" value="Tbio"/>
</dbReference>
<dbReference type="PRO" id="PR:Q9HBI1"/>
<dbReference type="Proteomes" id="UP000005640">
    <property type="component" value="Chromosome 22"/>
</dbReference>
<dbReference type="RNAct" id="Q9HBI1">
    <property type="molecule type" value="protein"/>
</dbReference>
<dbReference type="Bgee" id="ENSG00000188677">
    <property type="expression patterns" value="Expressed in hindlimb stylopod muscle and 160 other cell types or tissues"/>
</dbReference>
<dbReference type="ExpressionAtlas" id="Q9HBI1">
    <property type="expression patterns" value="baseline and differential"/>
</dbReference>
<dbReference type="GO" id="GO:0015629">
    <property type="term" value="C:actin cytoskeleton"/>
    <property type="evidence" value="ECO:0000314"/>
    <property type="project" value="HPA"/>
</dbReference>
<dbReference type="GO" id="GO:0005737">
    <property type="term" value="C:cytoplasm"/>
    <property type="evidence" value="ECO:0000318"/>
    <property type="project" value="GO_Central"/>
</dbReference>
<dbReference type="GO" id="GO:0005829">
    <property type="term" value="C:cytosol"/>
    <property type="evidence" value="ECO:0000304"/>
    <property type="project" value="Reactome"/>
</dbReference>
<dbReference type="GO" id="GO:0005925">
    <property type="term" value="C:focal adhesion"/>
    <property type="evidence" value="ECO:0000314"/>
    <property type="project" value="UniProtKB"/>
</dbReference>
<dbReference type="GO" id="GO:0030027">
    <property type="term" value="C:lamellipodium"/>
    <property type="evidence" value="ECO:0000314"/>
    <property type="project" value="UniProtKB"/>
</dbReference>
<dbReference type="GO" id="GO:0005886">
    <property type="term" value="C:plasma membrane"/>
    <property type="evidence" value="ECO:0000314"/>
    <property type="project" value="HPA"/>
</dbReference>
<dbReference type="GO" id="GO:0030018">
    <property type="term" value="C:Z disc"/>
    <property type="evidence" value="ECO:0007669"/>
    <property type="project" value="UniProtKB-SubCell"/>
</dbReference>
<dbReference type="GO" id="GO:0003779">
    <property type="term" value="F:actin binding"/>
    <property type="evidence" value="ECO:0000318"/>
    <property type="project" value="GO_Central"/>
</dbReference>
<dbReference type="GO" id="GO:0030036">
    <property type="term" value="P:actin cytoskeleton organization"/>
    <property type="evidence" value="ECO:0000315"/>
    <property type="project" value="UniProtKB"/>
</dbReference>
<dbReference type="GO" id="GO:0030031">
    <property type="term" value="P:cell projection assembly"/>
    <property type="evidence" value="ECO:0000315"/>
    <property type="project" value="UniProtKB"/>
</dbReference>
<dbReference type="GO" id="GO:0071963">
    <property type="term" value="P:establishment or maintenance of cell polarity regulating cell shape"/>
    <property type="evidence" value="ECO:0000315"/>
    <property type="project" value="UniProtKB"/>
</dbReference>
<dbReference type="GO" id="GO:0030032">
    <property type="term" value="P:lamellipodium assembly"/>
    <property type="evidence" value="ECO:0000315"/>
    <property type="project" value="UniProtKB"/>
</dbReference>
<dbReference type="GO" id="GO:0034446">
    <property type="term" value="P:substrate adhesion-dependent cell spreading"/>
    <property type="evidence" value="ECO:0000318"/>
    <property type="project" value="GO_Central"/>
</dbReference>
<dbReference type="CDD" id="cd21336">
    <property type="entry name" value="CH_PARVB_rpt1"/>
    <property type="match status" value="1"/>
</dbReference>
<dbReference type="CDD" id="cd21338">
    <property type="entry name" value="CH_PARVB_rpt2"/>
    <property type="match status" value="1"/>
</dbReference>
<dbReference type="FunFam" id="1.10.418.10:FF:000015">
    <property type="entry name" value="Parvin beta"/>
    <property type="match status" value="1"/>
</dbReference>
<dbReference type="FunFam" id="1.10.418.10:FF:000011">
    <property type="entry name" value="Parvin, beta"/>
    <property type="match status" value="1"/>
</dbReference>
<dbReference type="Gene3D" id="1.10.418.10">
    <property type="entry name" value="Calponin-like domain"/>
    <property type="match status" value="2"/>
</dbReference>
<dbReference type="InterPro" id="IPR001715">
    <property type="entry name" value="CH_dom"/>
</dbReference>
<dbReference type="InterPro" id="IPR036872">
    <property type="entry name" value="CH_dom_sf"/>
</dbReference>
<dbReference type="InterPro" id="IPR028433">
    <property type="entry name" value="Parvin"/>
</dbReference>
<dbReference type="PANTHER" id="PTHR12114:SF7">
    <property type="entry name" value="BETA-PARVIN"/>
    <property type="match status" value="1"/>
</dbReference>
<dbReference type="PANTHER" id="PTHR12114">
    <property type="entry name" value="PARVIN"/>
    <property type="match status" value="1"/>
</dbReference>
<dbReference type="Pfam" id="PF00307">
    <property type="entry name" value="CH"/>
    <property type="match status" value="2"/>
</dbReference>
<dbReference type="PIRSF" id="PIRSF039131">
    <property type="entry name" value="Parvin"/>
    <property type="match status" value="1"/>
</dbReference>
<dbReference type="SMART" id="SM00033">
    <property type="entry name" value="CH"/>
    <property type="match status" value="2"/>
</dbReference>
<dbReference type="SUPFAM" id="SSF47576">
    <property type="entry name" value="Calponin-homology domain, CH-domain"/>
    <property type="match status" value="1"/>
</dbReference>
<dbReference type="PROSITE" id="PS50021">
    <property type="entry name" value="CH"/>
    <property type="match status" value="2"/>
</dbReference>
<name>PARVB_HUMAN</name>
<protein>
    <recommendedName>
        <fullName>Beta-parvin</fullName>
    </recommendedName>
    <alternativeName>
        <fullName>Affixin</fullName>
    </alternativeName>
</protein>
<sequence length="364" mass="41714">MSSAPRSPTPRPRRMKKDESFLGKLGGTLARKRRAREVSDLQEEGKNAINSPMSPALVDVHPEDTQLEENEERTMIDPTSKEDPKFKELVKVLLDWINDVLVEERIIVKQLEEDLYDGQVLQKLLEKLAGCKLNVAEVTQSEIGQKQKLQTVLEAVHDLLRPRGWALRWSVDSIHGKNLVAILHLLVSLAMHFRAPIRLPEHVTVQVVVVRKREGLLHSSHISEELTTTTEMMMGRFERDAFDTLFDHAPDKLSVVKKSLITFVNKHLNKLNLEVTELETQFADGVYLVLLMGLLEDYFVPLHHFYLTPESFDQKVHNVSFAFELMLDGGLKKPKARPEDVVNLDLKSTLRVLYNLFTKYKNVE</sequence>